<gene>
    <name type="primary">hypE</name>
</gene>
<protein>
    <recommendedName>
        <fullName evidence="1">Carbamoyl dehydratase HypE</fullName>
        <ecNumber evidence="1">4.2.1.-</ecNumber>
    </recommendedName>
    <alternativeName>
        <fullName evidence="1">Hydrogenase maturation factor HypE</fullName>
    </alternativeName>
</protein>
<keyword id="KW-0456">Lyase</keyword>
<name>HYPE_AZOVI</name>
<comment type="function">
    <text evidence="1">Involved in the maturation of [NiFe] hydrogenases. Along with HypF, it catalyzes the synthesis of the CN ligands of the active site iron of [NiFe]-hydrogenases. HypE catalyzes the ATP-dependent dehydration of the carboxamido group attached to its C-terminal cysteine to a cyano group.</text>
</comment>
<comment type="catalytic activity">
    <reaction evidence="1">
        <text>C-terminal S-carboxamide-L-cysteinyl-[HypE protein] + ATP = C-terminal S-cyanate-L-cysteinyl-[HypE protein] + ADP + phosphate + H(+)</text>
        <dbReference type="Rhea" id="RHEA:55644"/>
        <dbReference type="Rhea" id="RHEA-COMP:14247"/>
        <dbReference type="Rhea" id="RHEA-COMP:14248"/>
        <dbReference type="ChEBI" id="CHEBI:15378"/>
        <dbReference type="ChEBI" id="CHEBI:30616"/>
        <dbReference type="ChEBI" id="CHEBI:43474"/>
        <dbReference type="ChEBI" id="CHEBI:139126"/>
        <dbReference type="ChEBI" id="CHEBI:139127"/>
        <dbReference type="ChEBI" id="CHEBI:456216"/>
    </reaction>
</comment>
<comment type="pathway">
    <text evidence="1">Protein modification; [NiFe] hydrogenase maturation.</text>
</comment>
<comment type="PTM">
    <text evidence="1">Modified by HypF, which adds a carboxamido group to the thiolate of the C-terminal cysteine, yielding a protein-S-carboxamide. The carboxamido group is then dehydrated by HypE itself to yield a protein-thiocyanate.</text>
</comment>
<comment type="similarity">
    <text evidence="2">Belongs to the HypE family.</text>
</comment>
<reference key="1">
    <citation type="journal article" date="1994" name="J. Mol. Biol.">
        <title>The hypE gene completes the gene cluster for H2-oxidation in Azotobacter vinelandii.</title>
        <authorList>
            <person name="Garg R.P."/>
            <person name="Menon A.L."/>
            <person name="Jacobs K."/>
            <person name="Robson R.M."/>
            <person name="Robson R.L."/>
        </authorList>
    </citation>
    <scope>NUCLEOTIDE SEQUENCE [GENOMIC DNA]</scope>
    <source>
        <strain>ATCC 13705 / OP1 / DSM 366 / NCIMB 11614 / LMG 3878 / UW</strain>
    </source>
</reference>
<organism>
    <name type="scientific">Azotobacter vinelandii</name>
    <dbReference type="NCBI Taxonomy" id="354"/>
    <lineage>
        <taxon>Bacteria</taxon>
        <taxon>Pseudomonadati</taxon>
        <taxon>Pseudomonadota</taxon>
        <taxon>Gammaproteobacteria</taxon>
        <taxon>Pseudomonadales</taxon>
        <taxon>Pseudomonadaceae</taxon>
        <taxon>Azotobacter</taxon>
    </lineage>
</organism>
<dbReference type="EC" id="4.2.1.-" evidence="1"/>
<dbReference type="EMBL" id="L23970">
    <property type="protein sequence ID" value="AAA19513.1"/>
    <property type="molecule type" value="Unassigned_DNA"/>
</dbReference>
<dbReference type="PIR" id="S43354">
    <property type="entry name" value="S43354"/>
</dbReference>
<dbReference type="RefSeq" id="WP_012703485.1">
    <property type="nucleotide sequence ID" value="NZ_FPKM01000029.1"/>
</dbReference>
<dbReference type="SMR" id="P40595"/>
<dbReference type="GeneID" id="88187880"/>
<dbReference type="OMA" id="HAMHDPT"/>
<dbReference type="UniPathway" id="UPA00335"/>
<dbReference type="GO" id="GO:0016829">
    <property type="term" value="F:lyase activity"/>
    <property type="evidence" value="ECO:0007669"/>
    <property type="project" value="UniProtKB-KW"/>
</dbReference>
<dbReference type="GO" id="GO:0051604">
    <property type="term" value="P:protein maturation"/>
    <property type="evidence" value="ECO:0007669"/>
    <property type="project" value="TreeGrafter"/>
</dbReference>
<dbReference type="CDD" id="cd02197">
    <property type="entry name" value="HypE"/>
    <property type="match status" value="1"/>
</dbReference>
<dbReference type="Gene3D" id="3.90.650.10">
    <property type="entry name" value="PurM-like C-terminal domain"/>
    <property type="match status" value="1"/>
</dbReference>
<dbReference type="Gene3D" id="3.30.1330.10">
    <property type="entry name" value="PurM-like, N-terminal domain"/>
    <property type="match status" value="1"/>
</dbReference>
<dbReference type="InterPro" id="IPR011854">
    <property type="entry name" value="HypE"/>
</dbReference>
<dbReference type="InterPro" id="IPR010918">
    <property type="entry name" value="PurM-like_C_dom"/>
</dbReference>
<dbReference type="InterPro" id="IPR036676">
    <property type="entry name" value="PurM-like_C_sf"/>
</dbReference>
<dbReference type="InterPro" id="IPR016188">
    <property type="entry name" value="PurM-like_N"/>
</dbReference>
<dbReference type="InterPro" id="IPR036921">
    <property type="entry name" value="PurM-like_N_sf"/>
</dbReference>
<dbReference type="NCBIfam" id="TIGR02124">
    <property type="entry name" value="hypE"/>
    <property type="match status" value="1"/>
</dbReference>
<dbReference type="PANTHER" id="PTHR30303:SF0">
    <property type="entry name" value="CARBAMOYL DEHYDRATASE HYPE"/>
    <property type="match status" value="1"/>
</dbReference>
<dbReference type="PANTHER" id="PTHR30303">
    <property type="entry name" value="HYDROGENASE ISOENZYMES FORMATION PROTEIN HYPE"/>
    <property type="match status" value="1"/>
</dbReference>
<dbReference type="Pfam" id="PF00586">
    <property type="entry name" value="AIRS"/>
    <property type="match status" value="1"/>
</dbReference>
<dbReference type="Pfam" id="PF02769">
    <property type="entry name" value="AIRS_C"/>
    <property type="match status" value="1"/>
</dbReference>
<dbReference type="PIRSF" id="PIRSF005644">
    <property type="entry name" value="Hdrgns_mtr_HypE"/>
    <property type="match status" value="1"/>
</dbReference>
<dbReference type="SUPFAM" id="SSF56042">
    <property type="entry name" value="PurM C-terminal domain-like"/>
    <property type="match status" value="1"/>
</dbReference>
<dbReference type="SUPFAM" id="SSF55326">
    <property type="entry name" value="PurM N-terminal domain-like"/>
    <property type="match status" value="1"/>
</dbReference>
<feature type="chain" id="PRO_0000201457" description="Carbamoyl dehydratase HypE">
    <location>
        <begin position="1"/>
        <end position="341"/>
    </location>
</feature>
<feature type="modified residue" description="S-carbamoylcysteine" evidence="1">
    <location>
        <position position="341"/>
    </location>
</feature>
<feature type="modified residue" description="S-cyanocysteine" evidence="1">
    <location>
        <position position="341"/>
    </location>
</feature>
<sequence>MSRLDLRNGSVEMVHGSGGRAMGQLIEELFARALRNEWLDQRNDQAQFELPPGRVVMATDSHVISPLFFPGGDIGSLAVHGTINDVAMAGARPCYLAAGFILEEGFPLADLARIVESMAAAAREAGVPVVTGDTKVVEHGKGDGVFITTTGVGVVPPGLHLSGDQARPGDRILLSGSIGDHGVTILSLREGLGFEADIGSDSQALHGLVAAMLAAVPEIRCLRDPTRGGLGNTLNELARQSGVGMQLVERAIPVREPVRAACEFLGLDPLYVANEGKLIAICPAERAERLLEAMRAHPQGREAAIIGTVVADEHRFVQMETPFGGSRMVDWLSGEQLPRIC</sequence>
<proteinExistence type="inferred from homology"/>
<evidence type="ECO:0000250" key="1">
    <source>
        <dbReference type="UniProtKB" id="P24193"/>
    </source>
</evidence>
<evidence type="ECO:0000305" key="2"/>
<accession>P40595</accession>